<comment type="function">
    <text evidence="1">Catalyzes the methyl esterification of L-isoaspartyl residues in peptides and proteins that result from spontaneous decomposition of normal L-aspartyl and L-asparaginyl residues. It plays a role in the repair and/or degradation of damaged proteins.</text>
</comment>
<comment type="catalytic activity">
    <reaction evidence="1">
        <text>[protein]-L-isoaspartate + S-adenosyl-L-methionine = [protein]-L-isoaspartate alpha-methyl ester + S-adenosyl-L-homocysteine</text>
        <dbReference type="Rhea" id="RHEA:12705"/>
        <dbReference type="Rhea" id="RHEA-COMP:12143"/>
        <dbReference type="Rhea" id="RHEA-COMP:12144"/>
        <dbReference type="ChEBI" id="CHEBI:57856"/>
        <dbReference type="ChEBI" id="CHEBI:59789"/>
        <dbReference type="ChEBI" id="CHEBI:90596"/>
        <dbReference type="ChEBI" id="CHEBI:90598"/>
        <dbReference type="EC" id="2.1.1.77"/>
    </reaction>
</comment>
<comment type="subcellular location">
    <subcellularLocation>
        <location evidence="1">Cytoplasm</location>
    </subcellularLocation>
</comment>
<comment type="similarity">
    <text evidence="1">Belongs to the methyltransferase superfamily. L-isoaspartyl/D-aspartyl protein methyltransferase family.</text>
</comment>
<organism>
    <name type="scientific">Burkholderia ambifaria (strain MC40-6)</name>
    <dbReference type="NCBI Taxonomy" id="398577"/>
    <lineage>
        <taxon>Bacteria</taxon>
        <taxon>Pseudomonadati</taxon>
        <taxon>Pseudomonadota</taxon>
        <taxon>Betaproteobacteria</taxon>
        <taxon>Burkholderiales</taxon>
        <taxon>Burkholderiaceae</taxon>
        <taxon>Burkholderia</taxon>
        <taxon>Burkholderia cepacia complex</taxon>
    </lineage>
</organism>
<protein>
    <recommendedName>
        <fullName evidence="1">Protein-L-isoaspartate O-methyltransferase</fullName>
        <ecNumber evidence="1">2.1.1.77</ecNumber>
    </recommendedName>
    <alternativeName>
        <fullName evidence="1">L-isoaspartyl protein carboxyl methyltransferase</fullName>
    </alternativeName>
    <alternativeName>
        <fullName evidence="1">Protein L-isoaspartyl methyltransferase</fullName>
    </alternativeName>
    <alternativeName>
        <fullName evidence="1">Protein-beta-aspartate methyltransferase</fullName>
        <shortName evidence="1">PIMT</shortName>
    </alternativeName>
</protein>
<keyword id="KW-0963">Cytoplasm</keyword>
<keyword id="KW-0489">Methyltransferase</keyword>
<keyword id="KW-0949">S-adenosyl-L-methionine</keyword>
<keyword id="KW-0808">Transferase</keyword>
<accession>B1YRE4</accession>
<reference key="1">
    <citation type="submission" date="2008-04" db="EMBL/GenBank/DDBJ databases">
        <title>Complete sequence of chromosome 1 of Burkholderia ambifaria MC40-6.</title>
        <authorList>
            <person name="Copeland A."/>
            <person name="Lucas S."/>
            <person name="Lapidus A."/>
            <person name="Glavina del Rio T."/>
            <person name="Dalin E."/>
            <person name="Tice H."/>
            <person name="Pitluck S."/>
            <person name="Chain P."/>
            <person name="Malfatti S."/>
            <person name="Shin M."/>
            <person name="Vergez L."/>
            <person name="Lang D."/>
            <person name="Schmutz J."/>
            <person name="Larimer F."/>
            <person name="Land M."/>
            <person name="Hauser L."/>
            <person name="Kyrpides N."/>
            <person name="Lykidis A."/>
            <person name="Ramette A."/>
            <person name="Konstantinidis K."/>
            <person name="Tiedje J."/>
            <person name="Richardson P."/>
        </authorList>
    </citation>
    <scope>NUCLEOTIDE SEQUENCE [LARGE SCALE GENOMIC DNA]</scope>
    <source>
        <strain>MC40-6</strain>
    </source>
</reference>
<feature type="chain" id="PRO_0000351825" description="Protein-L-isoaspartate O-methyltransferase">
    <location>
        <begin position="1"/>
        <end position="315"/>
    </location>
</feature>
<feature type="region of interest" description="Disordered" evidence="2">
    <location>
        <begin position="1"/>
        <end position="47"/>
    </location>
</feature>
<feature type="region of interest" description="Disordered" evidence="2">
    <location>
        <begin position="59"/>
        <end position="89"/>
    </location>
</feature>
<feature type="compositionally biased region" description="Basic and acidic residues" evidence="2">
    <location>
        <begin position="14"/>
        <end position="34"/>
    </location>
</feature>
<feature type="compositionally biased region" description="Low complexity" evidence="2">
    <location>
        <begin position="35"/>
        <end position="47"/>
    </location>
</feature>
<feature type="compositionally biased region" description="Low complexity" evidence="2">
    <location>
        <begin position="59"/>
        <end position="81"/>
    </location>
</feature>
<feature type="active site" evidence="1">
    <location>
        <position position="162"/>
    </location>
</feature>
<sequence>MSGERAKRFPLALEDLKRAPRKSEVRSGSGERHAASAVPKAADKPAAVLKPVAKTGAARALPGTTAAKPATAPKPNLLKPAMPQPAAPKLAAPSIAPAGAFALTSERVRERMVERLRANGVTDARVLDAMAAVPRHMFVDPGLATQAYEDAALPIGHQQTISKPSVVARMIELAMAGRTLERVLEIGTGCGYQAAVLSHVARDVYSIERIKPLYERAKLNLRPLRVPNIRLHYGDGRVGLPSAAPFDAIVIAAAGLDVPQALLEQLAIGGRLVAPVGAQSGQHQVLTLVERVAPAQWRESRLDRVFFVPLKSGVI</sequence>
<name>PIMT_BURA4</name>
<proteinExistence type="inferred from homology"/>
<dbReference type="EC" id="2.1.1.77" evidence="1"/>
<dbReference type="EMBL" id="CP001025">
    <property type="protein sequence ID" value="ACB64218.1"/>
    <property type="molecule type" value="Genomic_DNA"/>
</dbReference>
<dbReference type="RefSeq" id="WP_012364002.1">
    <property type="nucleotide sequence ID" value="NC_010551.1"/>
</dbReference>
<dbReference type="SMR" id="B1YRE4"/>
<dbReference type="KEGG" id="bac:BamMC406_1733"/>
<dbReference type="HOGENOM" id="CLU_055432_1_0_4"/>
<dbReference type="OrthoDB" id="9810066at2"/>
<dbReference type="Proteomes" id="UP000001680">
    <property type="component" value="Chromosome 1"/>
</dbReference>
<dbReference type="GO" id="GO:0005737">
    <property type="term" value="C:cytoplasm"/>
    <property type="evidence" value="ECO:0007669"/>
    <property type="project" value="UniProtKB-SubCell"/>
</dbReference>
<dbReference type="GO" id="GO:0004719">
    <property type="term" value="F:protein-L-isoaspartate (D-aspartate) O-methyltransferase activity"/>
    <property type="evidence" value="ECO:0007669"/>
    <property type="project" value="UniProtKB-UniRule"/>
</dbReference>
<dbReference type="GO" id="GO:0032259">
    <property type="term" value="P:methylation"/>
    <property type="evidence" value="ECO:0007669"/>
    <property type="project" value="UniProtKB-KW"/>
</dbReference>
<dbReference type="GO" id="GO:0036211">
    <property type="term" value="P:protein modification process"/>
    <property type="evidence" value="ECO:0007669"/>
    <property type="project" value="UniProtKB-UniRule"/>
</dbReference>
<dbReference type="GO" id="GO:0030091">
    <property type="term" value="P:protein repair"/>
    <property type="evidence" value="ECO:0007669"/>
    <property type="project" value="UniProtKB-UniRule"/>
</dbReference>
<dbReference type="CDD" id="cd02440">
    <property type="entry name" value="AdoMet_MTases"/>
    <property type="match status" value="1"/>
</dbReference>
<dbReference type="FunFam" id="3.40.50.150:FF:000010">
    <property type="entry name" value="Protein-L-isoaspartate O-methyltransferase"/>
    <property type="match status" value="1"/>
</dbReference>
<dbReference type="Gene3D" id="3.40.50.150">
    <property type="entry name" value="Vaccinia Virus protein VP39"/>
    <property type="match status" value="1"/>
</dbReference>
<dbReference type="HAMAP" id="MF_00090">
    <property type="entry name" value="PIMT"/>
    <property type="match status" value="1"/>
</dbReference>
<dbReference type="InterPro" id="IPR000682">
    <property type="entry name" value="PCMT"/>
</dbReference>
<dbReference type="InterPro" id="IPR029063">
    <property type="entry name" value="SAM-dependent_MTases_sf"/>
</dbReference>
<dbReference type="NCBIfam" id="TIGR00080">
    <property type="entry name" value="pimt"/>
    <property type="match status" value="1"/>
</dbReference>
<dbReference type="NCBIfam" id="NF001453">
    <property type="entry name" value="PRK00312.1"/>
    <property type="match status" value="1"/>
</dbReference>
<dbReference type="PANTHER" id="PTHR11579">
    <property type="entry name" value="PROTEIN-L-ISOASPARTATE O-METHYLTRANSFERASE"/>
    <property type="match status" value="1"/>
</dbReference>
<dbReference type="PANTHER" id="PTHR11579:SF0">
    <property type="entry name" value="PROTEIN-L-ISOASPARTATE(D-ASPARTATE) O-METHYLTRANSFERASE"/>
    <property type="match status" value="1"/>
</dbReference>
<dbReference type="Pfam" id="PF01135">
    <property type="entry name" value="PCMT"/>
    <property type="match status" value="1"/>
</dbReference>
<dbReference type="SUPFAM" id="SSF53335">
    <property type="entry name" value="S-adenosyl-L-methionine-dependent methyltransferases"/>
    <property type="match status" value="1"/>
</dbReference>
<dbReference type="PROSITE" id="PS01279">
    <property type="entry name" value="PCMT"/>
    <property type="match status" value="1"/>
</dbReference>
<gene>
    <name evidence="1" type="primary">pcm</name>
    <name type="ordered locus">BamMC406_1733</name>
</gene>
<evidence type="ECO:0000255" key="1">
    <source>
        <dbReference type="HAMAP-Rule" id="MF_00090"/>
    </source>
</evidence>
<evidence type="ECO:0000256" key="2">
    <source>
        <dbReference type="SAM" id="MobiDB-lite"/>
    </source>
</evidence>